<reference key="1">
    <citation type="submission" date="2005-09" db="EMBL/GenBank/DDBJ databases">
        <title>Complete sequence of chromosome 1 of Rhodobacter sphaeroides 2.4.1.</title>
        <authorList>
            <person name="Copeland A."/>
            <person name="Lucas S."/>
            <person name="Lapidus A."/>
            <person name="Barry K."/>
            <person name="Detter J.C."/>
            <person name="Glavina T."/>
            <person name="Hammon N."/>
            <person name="Israni S."/>
            <person name="Pitluck S."/>
            <person name="Richardson P."/>
            <person name="Mackenzie C."/>
            <person name="Choudhary M."/>
            <person name="Larimer F."/>
            <person name="Hauser L.J."/>
            <person name="Land M."/>
            <person name="Donohue T.J."/>
            <person name="Kaplan S."/>
        </authorList>
    </citation>
    <scope>NUCLEOTIDE SEQUENCE [LARGE SCALE GENOMIC DNA]</scope>
    <source>
        <strain>ATCC 17023 / DSM 158 / JCM 6121 / CCUG 31486 / LMG 2827 / NBRC 12203 / NCIMB 8253 / ATH 2.4.1.</strain>
    </source>
</reference>
<proteinExistence type="inferred from homology"/>
<sequence length="268" mass="28262">MLDSTTLVALVLGLLEGLTEFIPVSSTGHLLLAGHFLGFESAGRSFEVVIQLGAVLAVLTVYAAKLVSVIRAAPHDPRAFRFLVAVLVAFLPAVVIGVLAHGFIKAVLFETPILIATMLILGGIVLLFVDRMAPEPRYDDAMDLPLNVALKIGFIQCLAMVPGVSRSGATIVGGLMLGAGKRAAAEFSFFLSMPTMAGAFAFDLFKNRDVLDASALGEIAVGFVAAFVAAVLVVRWLLGYVSRHGYALFGWWRIAVGSVALAALLAGY</sequence>
<accession>Q3IYQ0</accession>
<feature type="chain" id="PRO_0000227636" description="Undecaprenyl-diphosphatase">
    <location>
        <begin position="1"/>
        <end position="268"/>
    </location>
</feature>
<feature type="transmembrane region" description="Helical" evidence="1">
    <location>
        <begin position="4"/>
        <end position="24"/>
    </location>
</feature>
<feature type="transmembrane region" description="Helical" evidence="1">
    <location>
        <begin position="50"/>
        <end position="70"/>
    </location>
</feature>
<feature type="transmembrane region" description="Helical" evidence="1">
    <location>
        <begin position="84"/>
        <end position="104"/>
    </location>
</feature>
<feature type="transmembrane region" description="Helical" evidence="1">
    <location>
        <begin position="109"/>
        <end position="129"/>
    </location>
</feature>
<feature type="transmembrane region" description="Helical" evidence="1">
    <location>
        <begin position="144"/>
        <end position="164"/>
    </location>
</feature>
<feature type="transmembrane region" description="Helical" evidence="1">
    <location>
        <begin position="185"/>
        <end position="205"/>
    </location>
</feature>
<feature type="transmembrane region" description="Helical" evidence="1">
    <location>
        <begin position="214"/>
        <end position="234"/>
    </location>
</feature>
<feature type="transmembrane region" description="Helical" evidence="1">
    <location>
        <begin position="247"/>
        <end position="267"/>
    </location>
</feature>
<organism>
    <name type="scientific">Cereibacter sphaeroides (strain ATCC 17023 / DSM 158 / JCM 6121 / CCUG 31486 / LMG 2827 / NBRC 12203 / NCIMB 8253 / ATH 2.4.1.)</name>
    <name type="common">Rhodobacter sphaeroides</name>
    <dbReference type="NCBI Taxonomy" id="272943"/>
    <lineage>
        <taxon>Bacteria</taxon>
        <taxon>Pseudomonadati</taxon>
        <taxon>Pseudomonadota</taxon>
        <taxon>Alphaproteobacteria</taxon>
        <taxon>Rhodobacterales</taxon>
        <taxon>Paracoccaceae</taxon>
        <taxon>Cereibacter</taxon>
    </lineage>
</organism>
<name>UPPP_CERS4</name>
<dbReference type="EC" id="3.6.1.27" evidence="1"/>
<dbReference type="EMBL" id="CP000143">
    <property type="protein sequence ID" value="ABA80334.1"/>
    <property type="molecule type" value="Genomic_DNA"/>
</dbReference>
<dbReference type="RefSeq" id="WP_002721584.1">
    <property type="nucleotide sequence ID" value="NZ_CP030271.1"/>
</dbReference>
<dbReference type="RefSeq" id="YP_354235.1">
    <property type="nucleotide sequence ID" value="NC_007493.2"/>
</dbReference>
<dbReference type="SMR" id="Q3IYQ0"/>
<dbReference type="STRING" id="272943.RSP_1150"/>
<dbReference type="EnsemblBacteria" id="ABA80334">
    <property type="protein sequence ID" value="ABA80334"/>
    <property type="gene ID" value="RSP_1150"/>
</dbReference>
<dbReference type="KEGG" id="rsp:RSP_1150"/>
<dbReference type="PATRIC" id="fig|272943.9.peg.3129"/>
<dbReference type="eggNOG" id="COG1968">
    <property type="taxonomic scope" value="Bacteria"/>
</dbReference>
<dbReference type="OrthoDB" id="9808289at2"/>
<dbReference type="PhylomeDB" id="Q3IYQ0"/>
<dbReference type="Proteomes" id="UP000002703">
    <property type="component" value="Chromosome 1"/>
</dbReference>
<dbReference type="GO" id="GO:0005886">
    <property type="term" value="C:plasma membrane"/>
    <property type="evidence" value="ECO:0007669"/>
    <property type="project" value="UniProtKB-SubCell"/>
</dbReference>
<dbReference type="GO" id="GO:0050380">
    <property type="term" value="F:undecaprenyl-diphosphatase activity"/>
    <property type="evidence" value="ECO:0007669"/>
    <property type="project" value="UniProtKB-UniRule"/>
</dbReference>
<dbReference type="GO" id="GO:0071555">
    <property type="term" value="P:cell wall organization"/>
    <property type="evidence" value="ECO:0007669"/>
    <property type="project" value="UniProtKB-KW"/>
</dbReference>
<dbReference type="GO" id="GO:0009252">
    <property type="term" value="P:peptidoglycan biosynthetic process"/>
    <property type="evidence" value="ECO:0007669"/>
    <property type="project" value="UniProtKB-KW"/>
</dbReference>
<dbReference type="GO" id="GO:0008360">
    <property type="term" value="P:regulation of cell shape"/>
    <property type="evidence" value="ECO:0007669"/>
    <property type="project" value="UniProtKB-KW"/>
</dbReference>
<dbReference type="GO" id="GO:0046677">
    <property type="term" value="P:response to antibiotic"/>
    <property type="evidence" value="ECO:0007669"/>
    <property type="project" value="UniProtKB-UniRule"/>
</dbReference>
<dbReference type="HAMAP" id="MF_01006">
    <property type="entry name" value="Undec_diphosphatase"/>
    <property type="match status" value="1"/>
</dbReference>
<dbReference type="InterPro" id="IPR003824">
    <property type="entry name" value="UppP"/>
</dbReference>
<dbReference type="NCBIfam" id="NF001389">
    <property type="entry name" value="PRK00281.1-2"/>
    <property type="match status" value="1"/>
</dbReference>
<dbReference type="NCBIfam" id="NF001390">
    <property type="entry name" value="PRK00281.1-4"/>
    <property type="match status" value="1"/>
</dbReference>
<dbReference type="NCBIfam" id="TIGR00753">
    <property type="entry name" value="undec_PP_bacA"/>
    <property type="match status" value="1"/>
</dbReference>
<dbReference type="PANTHER" id="PTHR30622">
    <property type="entry name" value="UNDECAPRENYL-DIPHOSPHATASE"/>
    <property type="match status" value="1"/>
</dbReference>
<dbReference type="PANTHER" id="PTHR30622:SF3">
    <property type="entry name" value="UNDECAPRENYL-DIPHOSPHATASE"/>
    <property type="match status" value="1"/>
</dbReference>
<dbReference type="Pfam" id="PF02673">
    <property type="entry name" value="BacA"/>
    <property type="match status" value="1"/>
</dbReference>
<gene>
    <name evidence="1" type="primary">uppP</name>
    <name type="synonym">bacA</name>
    <name type="ordered locus">RHOS4_27660</name>
    <name type="ORF">RSP_1150</name>
</gene>
<keyword id="KW-0046">Antibiotic resistance</keyword>
<keyword id="KW-0997">Cell inner membrane</keyword>
<keyword id="KW-1003">Cell membrane</keyword>
<keyword id="KW-0133">Cell shape</keyword>
<keyword id="KW-0961">Cell wall biogenesis/degradation</keyword>
<keyword id="KW-0378">Hydrolase</keyword>
<keyword id="KW-0472">Membrane</keyword>
<keyword id="KW-0573">Peptidoglycan synthesis</keyword>
<keyword id="KW-1185">Reference proteome</keyword>
<keyword id="KW-0812">Transmembrane</keyword>
<keyword id="KW-1133">Transmembrane helix</keyword>
<protein>
    <recommendedName>
        <fullName evidence="1">Undecaprenyl-diphosphatase</fullName>
        <ecNumber evidence="1">3.6.1.27</ecNumber>
    </recommendedName>
    <alternativeName>
        <fullName evidence="1">Bacitracin resistance protein</fullName>
    </alternativeName>
    <alternativeName>
        <fullName evidence="1">Undecaprenyl pyrophosphate phosphatase</fullName>
    </alternativeName>
</protein>
<comment type="function">
    <text evidence="1">Catalyzes the dephosphorylation of undecaprenyl diphosphate (UPP). Confers resistance to bacitracin.</text>
</comment>
<comment type="catalytic activity">
    <reaction evidence="1">
        <text>di-trans,octa-cis-undecaprenyl diphosphate + H2O = di-trans,octa-cis-undecaprenyl phosphate + phosphate + H(+)</text>
        <dbReference type="Rhea" id="RHEA:28094"/>
        <dbReference type="ChEBI" id="CHEBI:15377"/>
        <dbReference type="ChEBI" id="CHEBI:15378"/>
        <dbReference type="ChEBI" id="CHEBI:43474"/>
        <dbReference type="ChEBI" id="CHEBI:58405"/>
        <dbReference type="ChEBI" id="CHEBI:60392"/>
        <dbReference type="EC" id="3.6.1.27"/>
    </reaction>
</comment>
<comment type="subcellular location">
    <subcellularLocation>
        <location evidence="1">Cell inner membrane</location>
        <topology evidence="1">Multi-pass membrane protein</topology>
    </subcellularLocation>
</comment>
<comment type="miscellaneous">
    <text>Bacitracin is thought to be involved in the inhibition of peptidoglycan synthesis by sequestering undecaprenyl diphosphate, thereby reducing the pool of lipid carrier available.</text>
</comment>
<comment type="similarity">
    <text evidence="1">Belongs to the UppP family.</text>
</comment>
<evidence type="ECO:0000255" key="1">
    <source>
        <dbReference type="HAMAP-Rule" id="MF_01006"/>
    </source>
</evidence>